<comment type="function">
    <text evidence="1">Receptor tyrosine kinase which binds promiscuously GPI-anchored ephrin-A family ligands residing on adjacent cells, leading to contact-dependent bidirectional signaling into neighboring cells. The signaling pathway downstream of the receptor is referred to as forward signaling while the signaling pathway downstream of the ephrin ligand is referred to as reverse signaling (By similarity).</text>
</comment>
<comment type="catalytic activity">
    <reaction evidence="8">
        <text>L-tyrosyl-[protein] + ATP = O-phospho-L-tyrosyl-[protein] + ADP + H(+)</text>
        <dbReference type="Rhea" id="RHEA:10596"/>
        <dbReference type="Rhea" id="RHEA-COMP:10136"/>
        <dbReference type="Rhea" id="RHEA-COMP:20101"/>
        <dbReference type="ChEBI" id="CHEBI:15378"/>
        <dbReference type="ChEBI" id="CHEBI:30616"/>
        <dbReference type="ChEBI" id="CHEBI:46858"/>
        <dbReference type="ChEBI" id="CHEBI:61978"/>
        <dbReference type="ChEBI" id="CHEBI:456216"/>
        <dbReference type="EC" id="2.7.10.1"/>
    </reaction>
</comment>
<comment type="subunit">
    <text evidence="1 2">Heterotetramer upon binding of the ligand. The heterotetramer is composed of an ephrin dimer and a receptor dimer. Oligomerization is probably required to induce biological responses (By similarity). Interacts (via SAM domain) with ANKS1A (via SAM domain) (By similarity).</text>
</comment>
<comment type="subcellular location">
    <subcellularLocation>
        <location>Membrane</location>
        <topology>Single-pass type I membrane protein</topology>
    </subcellularLocation>
</comment>
<comment type="tissue specificity">
    <text>Brain.</text>
</comment>
<comment type="similarity">
    <text evidence="4">Belongs to the protein kinase superfamily. Tyr protein kinase family. Ephrin receptor subfamily.</text>
</comment>
<name>EPHA6_RAT</name>
<evidence type="ECO:0000250" key="1"/>
<evidence type="ECO:0000250" key="2">
    <source>
        <dbReference type="UniProtKB" id="Q62413"/>
    </source>
</evidence>
<evidence type="ECO:0000255" key="3"/>
<evidence type="ECO:0000255" key="4">
    <source>
        <dbReference type="PROSITE-ProRule" id="PRU00159"/>
    </source>
</evidence>
<evidence type="ECO:0000255" key="5">
    <source>
        <dbReference type="PROSITE-ProRule" id="PRU00184"/>
    </source>
</evidence>
<evidence type="ECO:0000255" key="6">
    <source>
        <dbReference type="PROSITE-ProRule" id="PRU00316"/>
    </source>
</evidence>
<evidence type="ECO:0000255" key="7">
    <source>
        <dbReference type="PROSITE-ProRule" id="PRU00883"/>
    </source>
</evidence>
<evidence type="ECO:0000255" key="8">
    <source>
        <dbReference type="PROSITE-ProRule" id="PRU10028"/>
    </source>
</evidence>
<feature type="signal peptide" evidence="3">
    <location>
        <begin position="1"/>
        <end position="22"/>
    </location>
</feature>
<feature type="chain" id="PRO_0000016817" description="Ephrin type-A receptor 6">
    <location>
        <begin position="23"/>
        <end position="1035"/>
    </location>
</feature>
<feature type="topological domain" description="Extracellular" evidence="3">
    <location>
        <begin position="23"/>
        <end position="549"/>
    </location>
</feature>
<feature type="transmembrane region" description="Helical" evidence="3">
    <location>
        <begin position="550"/>
        <end position="570"/>
    </location>
</feature>
<feature type="topological domain" description="Cytoplasmic" evidence="3">
    <location>
        <begin position="571"/>
        <end position="1035"/>
    </location>
</feature>
<feature type="domain" description="Eph LBD" evidence="7">
    <location>
        <begin position="33"/>
        <end position="211"/>
    </location>
</feature>
<feature type="domain" description="Fibronectin type-III 1" evidence="6">
    <location>
        <begin position="330"/>
        <end position="440"/>
    </location>
</feature>
<feature type="domain" description="Fibronectin type-III 2" evidence="6">
    <location>
        <begin position="441"/>
        <end position="536"/>
    </location>
</feature>
<feature type="domain" description="Protein kinase" evidence="4">
    <location>
        <begin position="630"/>
        <end position="943"/>
    </location>
</feature>
<feature type="domain" description="SAM" evidence="5">
    <location>
        <begin position="960"/>
        <end position="1024"/>
    </location>
</feature>
<feature type="short sequence motif" description="PDZ-binding" evidence="3">
    <location>
        <begin position="1033"/>
        <end position="1035"/>
    </location>
</feature>
<feature type="active site" description="Proton acceptor" evidence="4 8">
    <location>
        <position position="797"/>
    </location>
</feature>
<feature type="binding site" evidence="4">
    <location>
        <begin position="636"/>
        <end position="644"/>
    </location>
    <ligand>
        <name>ATP</name>
        <dbReference type="ChEBI" id="CHEBI:30616"/>
    </ligand>
</feature>
<feature type="binding site" evidence="4">
    <location>
        <position position="662"/>
    </location>
    <ligand>
        <name>ATP</name>
        <dbReference type="ChEBI" id="CHEBI:30616"/>
    </ligand>
</feature>
<feature type="modified residue" description="Phosphotyrosine; by autocatalysis" evidence="3">
    <location>
        <position position="605"/>
    </location>
</feature>
<feature type="modified residue" description="Phosphotyrosine; by autocatalysis" evidence="3">
    <location>
        <position position="611"/>
    </location>
</feature>
<feature type="modified residue" description="Phosphotyrosine; by autocatalysis" evidence="3">
    <location>
        <position position="830"/>
    </location>
</feature>
<feature type="modified residue" description="Phosphotyrosine; by autocatalysis" evidence="3">
    <location>
        <position position="977"/>
    </location>
</feature>
<feature type="glycosylation site" description="N-linked (GlcNAc...) asparagine" evidence="3">
    <location>
        <position position="342"/>
    </location>
</feature>
<feature type="glycosylation site" description="N-linked (GlcNAc...) asparagine" evidence="3">
    <location>
        <position position="396"/>
    </location>
</feature>
<feature type="glycosylation site" description="N-linked (GlcNAc...) asparagine" evidence="3">
    <location>
        <position position="409"/>
    </location>
</feature>
<protein>
    <recommendedName>
        <fullName>Ephrin type-A receptor 6</fullName>
        <ecNumber>2.7.10.1</ecNumber>
    </recommendedName>
    <alternativeName>
        <fullName>EPH homology kinase 2</fullName>
        <shortName>EHK-2</shortName>
    </alternativeName>
</protein>
<proteinExistence type="evidence at transcript level"/>
<organism>
    <name type="scientific">Rattus norvegicus</name>
    <name type="common">Rat</name>
    <dbReference type="NCBI Taxonomy" id="10116"/>
    <lineage>
        <taxon>Eukaryota</taxon>
        <taxon>Metazoa</taxon>
        <taxon>Chordata</taxon>
        <taxon>Craniata</taxon>
        <taxon>Vertebrata</taxon>
        <taxon>Euteleostomi</taxon>
        <taxon>Mammalia</taxon>
        <taxon>Eutheria</taxon>
        <taxon>Euarchontoglires</taxon>
        <taxon>Glires</taxon>
        <taxon>Rodentia</taxon>
        <taxon>Myomorpha</taxon>
        <taxon>Muroidea</taxon>
        <taxon>Muridae</taxon>
        <taxon>Murinae</taxon>
        <taxon>Rattus</taxon>
    </lineage>
</organism>
<reference key="1">
    <citation type="journal article" date="2004" name="Nature">
        <title>Genome sequence of the Brown Norway rat yields insights into mammalian evolution.</title>
        <authorList>
            <person name="Gibbs R.A."/>
            <person name="Weinstock G.M."/>
            <person name="Metzker M.L."/>
            <person name="Muzny D.M."/>
            <person name="Sodergren E.J."/>
            <person name="Scherer S."/>
            <person name="Scott G."/>
            <person name="Steffen D."/>
            <person name="Worley K.C."/>
            <person name="Burch P.E."/>
            <person name="Okwuonu G."/>
            <person name="Hines S."/>
            <person name="Lewis L."/>
            <person name="Deramo C."/>
            <person name="Delgado O."/>
            <person name="Dugan-Rocha S."/>
            <person name="Miner G."/>
            <person name="Morgan M."/>
            <person name="Hawes A."/>
            <person name="Gill R."/>
            <person name="Holt R.A."/>
            <person name="Adams M.D."/>
            <person name="Amanatides P.G."/>
            <person name="Baden-Tillson H."/>
            <person name="Barnstead M."/>
            <person name="Chin S."/>
            <person name="Evans C.A."/>
            <person name="Ferriera S."/>
            <person name="Fosler C."/>
            <person name="Glodek A."/>
            <person name="Gu Z."/>
            <person name="Jennings D."/>
            <person name="Kraft C.L."/>
            <person name="Nguyen T."/>
            <person name="Pfannkoch C.M."/>
            <person name="Sitter C."/>
            <person name="Sutton G.G."/>
            <person name="Venter J.C."/>
            <person name="Woodage T."/>
            <person name="Smith D."/>
            <person name="Lee H.-M."/>
            <person name="Gustafson E."/>
            <person name="Cahill P."/>
            <person name="Kana A."/>
            <person name="Doucette-Stamm L."/>
            <person name="Weinstock K."/>
            <person name="Fechtel K."/>
            <person name="Weiss R.B."/>
            <person name="Dunn D.M."/>
            <person name="Green E.D."/>
            <person name="Blakesley R.W."/>
            <person name="Bouffard G.G."/>
            <person name="De Jong P.J."/>
            <person name="Osoegawa K."/>
            <person name="Zhu B."/>
            <person name="Marra M."/>
            <person name="Schein J."/>
            <person name="Bosdet I."/>
            <person name="Fjell C."/>
            <person name="Jones S."/>
            <person name="Krzywinski M."/>
            <person name="Mathewson C."/>
            <person name="Siddiqui A."/>
            <person name="Wye N."/>
            <person name="McPherson J."/>
            <person name="Zhao S."/>
            <person name="Fraser C.M."/>
            <person name="Shetty J."/>
            <person name="Shatsman S."/>
            <person name="Geer K."/>
            <person name="Chen Y."/>
            <person name="Abramzon S."/>
            <person name="Nierman W.C."/>
            <person name="Havlak P.H."/>
            <person name="Chen R."/>
            <person name="Durbin K.J."/>
            <person name="Egan A."/>
            <person name="Ren Y."/>
            <person name="Song X.-Z."/>
            <person name="Li B."/>
            <person name="Liu Y."/>
            <person name="Qin X."/>
            <person name="Cawley S."/>
            <person name="Cooney A.J."/>
            <person name="D'Souza L.M."/>
            <person name="Martin K."/>
            <person name="Wu J.Q."/>
            <person name="Gonzalez-Garay M.L."/>
            <person name="Jackson A.R."/>
            <person name="Kalafus K.J."/>
            <person name="McLeod M.P."/>
            <person name="Milosavljevic A."/>
            <person name="Virk D."/>
            <person name="Volkov A."/>
            <person name="Wheeler D.A."/>
            <person name="Zhang Z."/>
            <person name="Bailey J.A."/>
            <person name="Eichler E.E."/>
            <person name="Tuzun E."/>
            <person name="Birney E."/>
            <person name="Mongin E."/>
            <person name="Ureta-Vidal A."/>
            <person name="Woodwark C."/>
            <person name="Zdobnov E."/>
            <person name="Bork P."/>
            <person name="Suyama M."/>
            <person name="Torrents D."/>
            <person name="Alexandersson M."/>
            <person name="Trask B.J."/>
            <person name="Young J.M."/>
            <person name="Huang H."/>
            <person name="Wang H."/>
            <person name="Xing H."/>
            <person name="Daniels S."/>
            <person name="Gietzen D."/>
            <person name="Schmidt J."/>
            <person name="Stevens K."/>
            <person name="Vitt U."/>
            <person name="Wingrove J."/>
            <person name="Camara F."/>
            <person name="Mar Alba M."/>
            <person name="Abril J.F."/>
            <person name="Guigo R."/>
            <person name="Smit A."/>
            <person name="Dubchak I."/>
            <person name="Rubin E.M."/>
            <person name="Couronne O."/>
            <person name="Poliakov A."/>
            <person name="Huebner N."/>
            <person name="Ganten D."/>
            <person name="Goesele C."/>
            <person name="Hummel O."/>
            <person name="Kreitler T."/>
            <person name="Lee Y.-A."/>
            <person name="Monti J."/>
            <person name="Schulz H."/>
            <person name="Zimdahl H."/>
            <person name="Himmelbauer H."/>
            <person name="Lehrach H."/>
            <person name="Jacob H.J."/>
            <person name="Bromberg S."/>
            <person name="Gullings-Handley J."/>
            <person name="Jensen-Seaman M.I."/>
            <person name="Kwitek A.E."/>
            <person name="Lazar J."/>
            <person name="Pasko D."/>
            <person name="Tonellato P.J."/>
            <person name="Twigger S."/>
            <person name="Ponting C.P."/>
            <person name="Duarte J.M."/>
            <person name="Rice S."/>
            <person name="Goodstadt L."/>
            <person name="Beatson S.A."/>
            <person name="Emes R.D."/>
            <person name="Winter E.E."/>
            <person name="Webber C."/>
            <person name="Brandt P."/>
            <person name="Nyakatura G."/>
            <person name="Adetobi M."/>
            <person name="Chiaromonte F."/>
            <person name="Elnitski L."/>
            <person name="Eswara P."/>
            <person name="Hardison R.C."/>
            <person name="Hou M."/>
            <person name="Kolbe D."/>
            <person name="Makova K."/>
            <person name="Miller W."/>
            <person name="Nekrutenko A."/>
            <person name="Riemer C."/>
            <person name="Schwartz S."/>
            <person name="Taylor J."/>
            <person name="Yang S."/>
            <person name="Zhang Y."/>
            <person name="Lindpaintner K."/>
            <person name="Andrews T.D."/>
            <person name="Caccamo M."/>
            <person name="Clamp M."/>
            <person name="Clarke L."/>
            <person name="Curwen V."/>
            <person name="Durbin R.M."/>
            <person name="Eyras E."/>
            <person name="Searle S.M."/>
            <person name="Cooper G.M."/>
            <person name="Batzoglou S."/>
            <person name="Brudno M."/>
            <person name="Sidow A."/>
            <person name="Stone E.A."/>
            <person name="Payseur B.A."/>
            <person name="Bourque G."/>
            <person name="Lopez-Otin C."/>
            <person name="Puente X.S."/>
            <person name="Chakrabarti K."/>
            <person name="Chatterji S."/>
            <person name="Dewey C."/>
            <person name="Pachter L."/>
            <person name="Bray N."/>
            <person name="Yap V.B."/>
            <person name="Caspi A."/>
            <person name="Tesler G."/>
            <person name="Pevzner P.A."/>
            <person name="Haussler D."/>
            <person name="Roskin K.M."/>
            <person name="Baertsch R."/>
            <person name="Clawson H."/>
            <person name="Furey T.S."/>
            <person name="Hinrichs A.S."/>
            <person name="Karolchik D."/>
            <person name="Kent W.J."/>
            <person name="Rosenbloom K.R."/>
            <person name="Trumbower H."/>
            <person name="Weirauch M."/>
            <person name="Cooper D.N."/>
            <person name="Stenson P.D."/>
            <person name="Ma B."/>
            <person name="Brent M."/>
            <person name="Arumugam M."/>
            <person name="Shteynberg D."/>
            <person name="Copley R.R."/>
            <person name="Taylor M.S."/>
            <person name="Riethman H."/>
            <person name="Mudunuri U."/>
            <person name="Peterson J."/>
            <person name="Guyer M."/>
            <person name="Felsenfeld A."/>
            <person name="Old S."/>
            <person name="Mockrin S."/>
            <person name="Collins F.S."/>
        </authorList>
    </citation>
    <scope>NUCLEOTIDE SEQUENCE [LARGE SCALE GENOMIC DNA]</scope>
    <source>
        <strain>Brown Norway</strain>
    </source>
</reference>
<reference key="2">
    <citation type="journal article" date="1993" name="Oncogene">
        <title>Ehk-1 and Ehk-2: two novel members of the Eph receptor-like tyrosine kinase family with distinctive structures and neuronal expression.</title>
        <authorList>
            <person name="Maisonpierre P.C."/>
            <person name="Barrezueta N.X."/>
            <person name="Yancopoulos G.D."/>
        </authorList>
    </citation>
    <scope>NUCLEOTIDE SEQUENCE [MRNA] OF 1-948</scope>
    <source>
        <strain>Sprague-Dawley</strain>
        <tissue>Brain</tissue>
    </source>
</reference>
<dbReference type="EC" id="2.7.10.1"/>
<dbReference type="EMBL" id="AABR03078339">
    <property type="status" value="NOT_ANNOTATED_CDS"/>
    <property type="molecule type" value="Genomic_DNA"/>
</dbReference>
<dbReference type="EMBL" id="AABR03079251">
    <property type="status" value="NOT_ANNOTATED_CDS"/>
    <property type="molecule type" value="Genomic_DNA"/>
</dbReference>
<dbReference type="EMBL" id="AABR03078729">
    <property type="status" value="NOT_ANNOTATED_CDS"/>
    <property type="molecule type" value="Genomic_DNA"/>
</dbReference>
<dbReference type="EMBL" id="AABR03078861">
    <property type="status" value="NOT_ANNOTATED_CDS"/>
    <property type="molecule type" value="Genomic_DNA"/>
</dbReference>
<dbReference type="EMBL" id="AABR03078320">
    <property type="status" value="NOT_ANNOTATED_CDS"/>
    <property type="molecule type" value="Genomic_DNA"/>
</dbReference>
<dbReference type="EMBL" id="AABR03078411">
    <property type="status" value="NOT_ANNOTATED_CDS"/>
    <property type="molecule type" value="Genomic_DNA"/>
</dbReference>
<dbReference type="EMBL" id="AABR03078368">
    <property type="status" value="NOT_ANNOTATED_CDS"/>
    <property type="molecule type" value="Genomic_DNA"/>
</dbReference>
<dbReference type="EMBL" id="AABR03080204">
    <property type="status" value="NOT_ANNOTATED_CDS"/>
    <property type="molecule type" value="Genomic_DNA"/>
</dbReference>
<dbReference type="EMBL" id="AABR03000001">
    <property type="status" value="NOT_ANNOTATED_CDS"/>
    <property type="molecule type" value="Genomic_DNA"/>
</dbReference>
<dbReference type="PIR" id="S51605">
    <property type="entry name" value="S51605"/>
</dbReference>
<dbReference type="SMR" id="P54758"/>
<dbReference type="FunCoup" id="P54758">
    <property type="interactions" value="631"/>
</dbReference>
<dbReference type="STRING" id="10116.ENSRNOP00000049409"/>
<dbReference type="GlyCosmos" id="P54758">
    <property type="glycosylation" value="3 sites, No reported glycans"/>
</dbReference>
<dbReference type="GlyGen" id="P54758">
    <property type="glycosylation" value="3 sites"/>
</dbReference>
<dbReference type="iPTMnet" id="P54758"/>
<dbReference type="PhosphoSitePlus" id="P54758"/>
<dbReference type="PaxDb" id="10116-ENSRNOP00000049409"/>
<dbReference type="UCSC" id="RGD:1304614">
    <property type="organism name" value="rat"/>
</dbReference>
<dbReference type="AGR" id="RGD:1304614"/>
<dbReference type="RGD" id="1304614">
    <property type="gene designation" value="Epha6"/>
</dbReference>
<dbReference type="InParanoid" id="P54758"/>
<dbReference type="PhylomeDB" id="P54758"/>
<dbReference type="Reactome" id="R-RNO-2682334">
    <property type="pathway name" value="EPH-Ephrin signaling"/>
</dbReference>
<dbReference type="Reactome" id="R-RNO-3928663">
    <property type="pathway name" value="EPHA-mediated growth cone collapse"/>
</dbReference>
<dbReference type="Reactome" id="R-RNO-3928665">
    <property type="pathway name" value="EPH-ephrin mediated repulsion of cells"/>
</dbReference>
<dbReference type="PRO" id="PR:P54758"/>
<dbReference type="Proteomes" id="UP000002494">
    <property type="component" value="Unplaced"/>
</dbReference>
<dbReference type="GO" id="GO:0030425">
    <property type="term" value="C:dendrite"/>
    <property type="evidence" value="ECO:0000318"/>
    <property type="project" value="GO_Central"/>
</dbReference>
<dbReference type="GO" id="GO:0005886">
    <property type="term" value="C:plasma membrane"/>
    <property type="evidence" value="ECO:0000318"/>
    <property type="project" value="GO_Central"/>
</dbReference>
<dbReference type="GO" id="GO:0005524">
    <property type="term" value="F:ATP binding"/>
    <property type="evidence" value="ECO:0007669"/>
    <property type="project" value="UniProtKB-KW"/>
</dbReference>
<dbReference type="GO" id="GO:0005005">
    <property type="term" value="F:transmembrane-ephrin receptor activity"/>
    <property type="evidence" value="ECO:0000318"/>
    <property type="project" value="GO_Central"/>
</dbReference>
<dbReference type="GO" id="GO:0007411">
    <property type="term" value="P:axon guidance"/>
    <property type="evidence" value="ECO:0000318"/>
    <property type="project" value="GO_Central"/>
</dbReference>
<dbReference type="GO" id="GO:0048013">
    <property type="term" value="P:ephrin receptor signaling pathway"/>
    <property type="evidence" value="ECO:0000318"/>
    <property type="project" value="GO_Central"/>
</dbReference>
<dbReference type="CDD" id="cd10484">
    <property type="entry name" value="EphR_LBD_A6"/>
    <property type="match status" value="1"/>
</dbReference>
<dbReference type="CDD" id="cd00063">
    <property type="entry name" value="FN3"/>
    <property type="match status" value="2"/>
</dbReference>
<dbReference type="CDD" id="cd05066">
    <property type="entry name" value="PTKc_EphR_A"/>
    <property type="match status" value="1"/>
</dbReference>
<dbReference type="CDD" id="cd09547">
    <property type="entry name" value="SAM_EPH-A6"/>
    <property type="match status" value="1"/>
</dbReference>
<dbReference type="FunFam" id="1.10.510.10:FF:000083">
    <property type="entry name" value="Ephrin type-A receptor 3"/>
    <property type="match status" value="1"/>
</dbReference>
<dbReference type="FunFam" id="1.10.150.50:FF:000001">
    <property type="entry name" value="Ephrin type-A receptor 5"/>
    <property type="match status" value="1"/>
</dbReference>
<dbReference type="FunFam" id="2.10.50.10:FF:000001">
    <property type="entry name" value="Ephrin type-A receptor 5"/>
    <property type="match status" value="1"/>
</dbReference>
<dbReference type="FunFam" id="2.60.40.1770:FF:000001">
    <property type="entry name" value="Ephrin type-A receptor 5"/>
    <property type="match status" value="1"/>
</dbReference>
<dbReference type="FunFam" id="3.30.200.20:FF:000001">
    <property type="entry name" value="Ephrin type-A receptor 5"/>
    <property type="match status" value="1"/>
</dbReference>
<dbReference type="FunFam" id="2.60.40.10:FF:001483">
    <property type="entry name" value="Ephrin type-A receptor 6"/>
    <property type="match status" value="1"/>
</dbReference>
<dbReference type="FunFam" id="2.60.120.260:FF:000001">
    <property type="entry name" value="Ephrin type-A receptor 7"/>
    <property type="match status" value="1"/>
</dbReference>
<dbReference type="FunFam" id="2.60.40.10:FF:000190">
    <property type="entry name" value="Ephrin type-A receptor 7"/>
    <property type="match status" value="1"/>
</dbReference>
<dbReference type="Gene3D" id="2.60.40.1770">
    <property type="entry name" value="ephrin a2 ectodomain"/>
    <property type="match status" value="1"/>
</dbReference>
<dbReference type="Gene3D" id="2.60.120.260">
    <property type="entry name" value="Galactose-binding domain-like"/>
    <property type="match status" value="1"/>
</dbReference>
<dbReference type="Gene3D" id="2.60.40.10">
    <property type="entry name" value="Immunoglobulins"/>
    <property type="match status" value="2"/>
</dbReference>
<dbReference type="Gene3D" id="3.30.200.20">
    <property type="entry name" value="Phosphorylase Kinase, domain 1"/>
    <property type="match status" value="1"/>
</dbReference>
<dbReference type="Gene3D" id="1.10.150.50">
    <property type="entry name" value="Transcription Factor, Ets-1"/>
    <property type="match status" value="1"/>
</dbReference>
<dbReference type="Gene3D" id="1.10.510.10">
    <property type="entry name" value="Transferase(Phosphotransferase) domain 1"/>
    <property type="match status" value="1"/>
</dbReference>
<dbReference type="Gene3D" id="2.10.50.10">
    <property type="entry name" value="Tumor Necrosis Factor Receptor, subunit A, domain 2"/>
    <property type="match status" value="1"/>
</dbReference>
<dbReference type="InterPro" id="IPR042746">
    <property type="entry name" value="EPH-A6_SAM"/>
</dbReference>
<dbReference type="InterPro" id="IPR027936">
    <property type="entry name" value="Eph_TM"/>
</dbReference>
<dbReference type="InterPro" id="IPR034280">
    <property type="entry name" value="EphA6_rcpt_lig-bd"/>
</dbReference>
<dbReference type="InterPro" id="IPR001090">
    <property type="entry name" value="Ephrin_rcpt_lig-bd_dom"/>
</dbReference>
<dbReference type="InterPro" id="IPR050449">
    <property type="entry name" value="Ephrin_rcpt_TKs"/>
</dbReference>
<dbReference type="InterPro" id="IPR003961">
    <property type="entry name" value="FN3_dom"/>
</dbReference>
<dbReference type="InterPro" id="IPR036116">
    <property type="entry name" value="FN3_sf"/>
</dbReference>
<dbReference type="InterPro" id="IPR008979">
    <property type="entry name" value="Galactose-bd-like_sf"/>
</dbReference>
<dbReference type="InterPro" id="IPR013783">
    <property type="entry name" value="Ig-like_fold"/>
</dbReference>
<dbReference type="InterPro" id="IPR011009">
    <property type="entry name" value="Kinase-like_dom_sf"/>
</dbReference>
<dbReference type="InterPro" id="IPR000719">
    <property type="entry name" value="Prot_kinase_dom"/>
</dbReference>
<dbReference type="InterPro" id="IPR017441">
    <property type="entry name" value="Protein_kinase_ATP_BS"/>
</dbReference>
<dbReference type="InterPro" id="IPR001660">
    <property type="entry name" value="SAM"/>
</dbReference>
<dbReference type="InterPro" id="IPR013761">
    <property type="entry name" value="SAM/pointed_sf"/>
</dbReference>
<dbReference type="InterPro" id="IPR001245">
    <property type="entry name" value="Ser-Thr/Tyr_kinase_cat_dom"/>
</dbReference>
<dbReference type="InterPro" id="IPR011641">
    <property type="entry name" value="Tyr-kin_ephrin_A/B_rcpt-like"/>
</dbReference>
<dbReference type="InterPro" id="IPR008266">
    <property type="entry name" value="Tyr_kinase_AS"/>
</dbReference>
<dbReference type="InterPro" id="IPR020635">
    <property type="entry name" value="Tyr_kinase_cat_dom"/>
</dbReference>
<dbReference type="InterPro" id="IPR016257">
    <property type="entry name" value="Tyr_kinase_ephrin_rcpt"/>
</dbReference>
<dbReference type="InterPro" id="IPR001426">
    <property type="entry name" value="Tyr_kinase_rcpt_V_CS"/>
</dbReference>
<dbReference type="PANTHER" id="PTHR46877">
    <property type="entry name" value="EPH RECEPTOR A5"/>
    <property type="match status" value="1"/>
</dbReference>
<dbReference type="PANTHER" id="PTHR46877:SF10">
    <property type="entry name" value="EPHRIN TYPE-A RECEPTOR 6"/>
    <property type="match status" value="1"/>
</dbReference>
<dbReference type="Pfam" id="PF14575">
    <property type="entry name" value="EphA2_TM"/>
    <property type="match status" value="1"/>
</dbReference>
<dbReference type="Pfam" id="PF01404">
    <property type="entry name" value="Ephrin_lbd"/>
    <property type="match status" value="1"/>
</dbReference>
<dbReference type="Pfam" id="PF07699">
    <property type="entry name" value="Ephrin_rec_like"/>
    <property type="match status" value="1"/>
</dbReference>
<dbReference type="Pfam" id="PF00041">
    <property type="entry name" value="fn3"/>
    <property type="match status" value="2"/>
</dbReference>
<dbReference type="Pfam" id="PF07714">
    <property type="entry name" value="PK_Tyr_Ser-Thr"/>
    <property type="match status" value="2"/>
</dbReference>
<dbReference type="Pfam" id="PF00536">
    <property type="entry name" value="SAM_1"/>
    <property type="match status" value="1"/>
</dbReference>
<dbReference type="PIRSF" id="PIRSF000666">
    <property type="entry name" value="TyrPK_ephrin_receptor"/>
    <property type="match status" value="1"/>
</dbReference>
<dbReference type="PRINTS" id="PR00014">
    <property type="entry name" value="FNTYPEIII"/>
</dbReference>
<dbReference type="PRINTS" id="PR00109">
    <property type="entry name" value="TYRKINASE"/>
</dbReference>
<dbReference type="SMART" id="SM00615">
    <property type="entry name" value="EPH_lbd"/>
    <property type="match status" value="1"/>
</dbReference>
<dbReference type="SMART" id="SM01411">
    <property type="entry name" value="Ephrin_rec_like"/>
    <property type="match status" value="1"/>
</dbReference>
<dbReference type="SMART" id="SM00060">
    <property type="entry name" value="FN3"/>
    <property type="match status" value="2"/>
</dbReference>
<dbReference type="SMART" id="SM00454">
    <property type="entry name" value="SAM"/>
    <property type="match status" value="1"/>
</dbReference>
<dbReference type="SMART" id="SM00219">
    <property type="entry name" value="TyrKc"/>
    <property type="match status" value="1"/>
</dbReference>
<dbReference type="SUPFAM" id="SSF49265">
    <property type="entry name" value="Fibronectin type III"/>
    <property type="match status" value="1"/>
</dbReference>
<dbReference type="SUPFAM" id="SSF49785">
    <property type="entry name" value="Galactose-binding domain-like"/>
    <property type="match status" value="1"/>
</dbReference>
<dbReference type="SUPFAM" id="SSF56112">
    <property type="entry name" value="Protein kinase-like (PK-like)"/>
    <property type="match status" value="1"/>
</dbReference>
<dbReference type="SUPFAM" id="SSF47769">
    <property type="entry name" value="SAM/Pointed domain"/>
    <property type="match status" value="1"/>
</dbReference>
<dbReference type="PROSITE" id="PS01186">
    <property type="entry name" value="EGF_2"/>
    <property type="match status" value="1"/>
</dbReference>
<dbReference type="PROSITE" id="PS51550">
    <property type="entry name" value="EPH_LBD"/>
    <property type="match status" value="1"/>
</dbReference>
<dbReference type="PROSITE" id="PS50853">
    <property type="entry name" value="FN3"/>
    <property type="match status" value="2"/>
</dbReference>
<dbReference type="PROSITE" id="PS00107">
    <property type="entry name" value="PROTEIN_KINASE_ATP"/>
    <property type="match status" value="1"/>
</dbReference>
<dbReference type="PROSITE" id="PS50011">
    <property type="entry name" value="PROTEIN_KINASE_DOM"/>
    <property type="match status" value="1"/>
</dbReference>
<dbReference type="PROSITE" id="PS00109">
    <property type="entry name" value="PROTEIN_KINASE_TYR"/>
    <property type="match status" value="1"/>
</dbReference>
<dbReference type="PROSITE" id="PS00790">
    <property type="entry name" value="RECEPTOR_TYR_KIN_V_1"/>
    <property type="match status" value="1"/>
</dbReference>
<dbReference type="PROSITE" id="PS00791">
    <property type="entry name" value="RECEPTOR_TYR_KIN_V_2"/>
    <property type="match status" value="1"/>
</dbReference>
<dbReference type="PROSITE" id="PS50105">
    <property type="entry name" value="SAM_DOMAIN"/>
    <property type="match status" value="1"/>
</dbReference>
<gene>
    <name type="primary">Epha6</name>
    <name type="synonym">Ehk-2</name>
    <name type="synonym">Ehk2</name>
</gene>
<sequence length="1035" mass="116209">MGGCEVREFLLQFGFFLPLLTAWTGDCSHVSNQVVLLDTSTVMGELGWKTYPLNGWDAITEMDEHNRPIHTYQVCNVMEPNQNNWLRTNWISRDAAQKIYVEMKFTLRDCNSIPWVLGTCKETFTLYYIESDESHGTKFKPSQYIKIDTIAADESFTQMDLGDRILKLNTEVREVGPIERKGFYLAFQDIGACIALVSVRVFYKKCPFTVRNLAMFPDTIPRVDSSSLVEVRGSCVKSSEERDTPKLYCGADGDWLVPLGRCICTTGYEEIEGSCHACRPGFYKAFAGNTKCSKCPPHSSTFVEATSVCHCEKGYFRAEKDPPSMACTRPPSAPRNVAFNINETALILEWSPPSDTGGRKDLTYSVICKKCGVDASQCEDCGAGLRFIPRPTGLINNSVVVLDFVSHVNYTFEIEAMNGVSELSISPKPFTAITVTTDQDAPSLIGMMRKDWASQNSLALSWQAPAFSNGAILDYEIKYYEKEHEQLTYSSTRSKAPSVIITGLKPATTYIFHIRVRTATGYSGYSQKFEFETGDETSDMAAEQGQILVIATAAVGGFTLLVILTLFFLITGRCQWYIKAKMKSEEKRRTHLQNSHLRFPGIKTYIDPDTYEDPSLAVHEFEKEIDPSRIRIERVIGAGEFGEVCSGRLKTPGKREIPVAIKTLKGGHMDRQRRDFLREASIMGQFDHPNIIRLEGVVTKRSFPAIGVEAFCPSFLRAGFLNGIQAPHPVTAGGSLPPRIPAGRPVMIVVEYMENGSLDSFLRKHDGHFTVIQLVGMLRGIASGMKYLSDMGYVHRDLAARNILVNSNLVCKVSDFGLSRVLEDDPEAAYTTTGGKIPIRWTAPEAIAYRKFSSASDVWSYGIVMWEVMSYGERPYWEMSNQDVILSIEEGYRLPAPMGCPPSLHQLMLHCWQKERNHRPKFTDIVSFLDKLIRNPSALHTLVEDILVMPESPGDVPEYPLFVTVGDWLDSIKMGQYKSNFMAAGFTTFDLISRMSIEDIRRIGVILIGHQRRIVSSIQTLRLHMMHIQEKGFHV</sequence>
<accession>P54758</accession>
<keyword id="KW-0067">ATP-binding</keyword>
<keyword id="KW-0325">Glycoprotein</keyword>
<keyword id="KW-0418">Kinase</keyword>
<keyword id="KW-0472">Membrane</keyword>
<keyword id="KW-0547">Nucleotide-binding</keyword>
<keyword id="KW-0597">Phosphoprotein</keyword>
<keyword id="KW-0675">Receptor</keyword>
<keyword id="KW-1185">Reference proteome</keyword>
<keyword id="KW-0677">Repeat</keyword>
<keyword id="KW-0732">Signal</keyword>
<keyword id="KW-0808">Transferase</keyword>
<keyword id="KW-0812">Transmembrane</keyword>
<keyword id="KW-1133">Transmembrane helix</keyword>
<keyword id="KW-0829">Tyrosine-protein kinase</keyword>